<accession>Q46Y87</accession>
<feature type="chain" id="PRO_0000242937" description="tRNA uridine(34) hydroxylase">
    <location>
        <begin position="1"/>
        <end position="282"/>
    </location>
</feature>
<feature type="domain" description="Rhodanese" evidence="1">
    <location>
        <begin position="128"/>
        <end position="222"/>
    </location>
</feature>
<feature type="active site" description="Cysteine persulfide intermediate" evidence="1">
    <location>
        <position position="182"/>
    </location>
</feature>
<dbReference type="EC" id="1.14.-.-" evidence="1"/>
<dbReference type="EMBL" id="CP000090">
    <property type="protein sequence ID" value="AAZ61896.1"/>
    <property type="molecule type" value="Genomic_DNA"/>
</dbReference>
<dbReference type="SMR" id="Q46Y87"/>
<dbReference type="STRING" id="264198.Reut_A2535"/>
<dbReference type="KEGG" id="reu:Reut_A2535"/>
<dbReference type="eggNOG" id="COG1054">
    <property type="taxonomic scope" value="Bacteria"/>
</dbReference>
<dbReference type="HOGENOM" id="CLU_038878_0_1_4"/>
<dbReference type="OrthoDB" id="9778326at2"/>
<dbReference type="GO" id="GO:0016705">
    <property type="term" value="F:oxidoreductase activity, acting on paired donors, with incorporation or reduction of molecular oxygen"/>
    <property type="evidence" value="ECO:0007669"/>
    <property type="project" value="UniProtKB-UniRule"/>
</dbReference>
<dbReference type="GO" id="GO:0006400">
    <property type="term" value="P:tRNA modification"/>
    <property type="evidence" value="ECO:0007669"/>
    <property type="project" value="UniProtKB-UniRule"/>
</dbReference>
<dbReference type="Gene3D" id="3.30.70.100">
    <property type="match status" value="1"/>
</dbReference>
<dbReference type="Gene3D" id="3.40.250.10">
    <property type="entry name" value="Rhodanese-like domain"/>
    <property type="match status" value="1"/>
</dbReference>
<dbReference type="HAMAP" id="MF_00469">
    <property type="entry name" value="TrhO"/>
    <property type="match status" value="1"/>
</dbReference>
<dbReference type="InterPro" id="IPR001763">
    <property type="entry name" value="Rhodanese-like_dom"/>
</dbReference>
<dbReference type="InterPro" id="IPR036873">
    <property type="entry name" value="Rhodanese-like_dom_sf"/>
</dbReference>
<dbReference type="InterPro" id="IPR020936">
    <property type="entry name" value="TrhO"/>
</dbReference>
<dbReference type="InterPro" id="IPR040503">
    <property type="entry name" value="TRHO_N"/>
</dbReference>
<dbReference type="NCBIfam" id="NF003703">
    <property type="entry name" value="PRK05320.1"/>
    <property type="match status" value="1"/>
</dbReference>
<dbReference type="PANTHER" id="PTHR43268:SF3">
    <property type="entry name" value="RHODANESE-LIKE DOMAIN-CONTAINING PROTEIN 7-RELATED"/>
    <property type="match status" value="1"/>
</dbReference>
<dbReference type="PANTHER" id="PTHR43268">
    <property type="entry name" value="THIOSULFATE SULFURTRANSFERASE/RHODANESE-LIKE DOMAIN-CONTAINING PROTEIN 2"/>
    <property type="match status" value="1"/>
</dbReference>
<dbReference type="Pfam" id="PF00581">
    <property type="entry name" value="Rhodanese"/>
    <property type="match status" value="1"/>
</dbReference>
<dbReference type="Pfam" id="PF17773">
    <property type="entry name" value="UPF0176_N"/>
    <property type="match status" value="1"/>
</dbReference>
<dbReference type="SMART" id="SM00450">
    <property type="entry name" value="RHOD"/>
    <property type="match status" value="1"/>
</dbReference>
<dbReference type="SUPFAM" id="SSF52821">
    <property type="entry name" value="Rhodanese/Cell cycle control phosphatase"/>
    <property type="match status" value="1"/>
</dbReference>
<dbReference type="PROSITE" id="PS50206">
    <property type="entry name" value="RHODANESE_3"/>
    <property type="match status" value="1"/>
</dbReference>
<organism>
    <name type="scientific">Cupriavidus pinatubonensis (strain JMP 134 / LMG 1197)</name>
    <name type="common">Cupriavidus necator (strain JMP 134)</name>
    <dbReference type="NCBI Taxonomy" id="264198"/>
    <lineage>
        <taxon>Bacteria</taxon>
        <taxon>Pseudomonadati</taxon>
        <taxon>Pseudomonadota</taxon>
        <taxon>Betaproteobacteria</taxon>
        <taxon>Burkholderiales</taxon>
        <taxon>Burkholderiaceae</taxon>
        <taxon>Cupriavidus</taxon>
    </lineage>
</organism>
<name>TRHO_CUPPJ</name>
<proteinExistence type="inferred from homology"/>
<reference key="1">
    <citation type="journal article" date="2010" name="PLoS ONE">
        <title>The complete multipartite genome sequence of Cupriavidus necator JMP134, a versatile pollutant degrader.</title>
        <authorList>
            <person name="Lykidis A."/>
            <person name="Perez-Pantoja D."/>
            <person name="Ledger T."/>
            <person name="Mavromatis K."/>
            <person name="Anderson I.J."/>
            <person name="Ivanova N.N."/>
            <person name="Hooper S.D."/>
            <person name="Lapidus A."/>
            <person name="Lucas S."/>
            <person name="Gonzalez B."/>
            <person name="Kyrpides N.C."/>
        </authorList>
    </citation>
    <scope>NUCLEOTIDE SEQUENCE [LARGE SCALE GENOMIC DNA]</scope>
    <source>
        <strain>JMP134 / LMG 1197</strain>
    </source>
</reference>
<gene>
    <name evidence="1" type="primary">trhO</name>
    <name type="ordered locus">Reut_A2535</name>
</gene>
<comment type="function">
    <text evidence="1">Catalyzes oxygen-dependent 5-hydroxyuridine (ho5U) modification at position 34 in tRNAs.</text>
</comment>
<comment type="catalytic activity">
    <reaction evidence="1">
        <text>uridine(34) in tRNA + AH2 + O2 = 5-hydroxyuridine(34) in tRNA + A + H2O</text>
        <dbReference type="Rhea" id="RHEA:64224"/>
        <dbReference type="Rhea" id="RHEA-COMP:11727"/>
        <dbReference type="Rhea" id="RHEA-COMP:13381"/>
        <dbReference type="ChEBI" id="CHEBI:13193"/>
        <dbReference type="ChEBI" id="CHEBI:15377"/>
        <dbReference type="ChEBI" id="CHEBI:15379"/>
        <dbReference type="ChEBI" id="CHEBI:17499"/>
        <dbReference type="ChEBI" id="CHEBI:65315"/>
        <dbReference type="ChEBI" id="CHEBI:136877"/>
    </reaction>
</comment>
<comment type="similarity">
    <text evidence="1">Belongs to the TrhO family.</text>
</comment>
<evidence type="ECO:0000255" key="1">
    <source>
        <dbReference type="HAMAP-Rule" id="MF_00469"/>
    </source>
</evidence>
<sequence length="282" mass="31751">MQIVNISAYKFVSLNDIETLRPEMRSRCEDLELKGTILLAPEGINMFLAGPRESIDGFMAWLHADTRFADIAPKESLSDNQPFKRMLVRAKKEIITMKRPLIRPEEGRAPSVRPVDLKRWLDQGHDDEGRPVVMLDTRNDFEVAVGTFDNVVEYNLTKFSEFPDVIEARKAEFEGKTVVSFCTGGIRCEKAAIHMQEVGIGHVYQLEGGILKYFEEVGGDHYRGDCFVFDYRTALNPNLEPAGPKQCFACRAVVTAEEQQSPHYVVGKSCPHCVGRHDQAAA</sequence>
<keyword id="KW-0560">Oxidoreductase</keyword>
<keyword id="KW-0819">tRNA processing</keyword>
<protein>
    <recommendedName>
        <fullName evidence="1">tRNA uridine(34) hydroxylase</fullName>
        <ecNumber evidence="1">1.14.-.-</ecNumber>
    </recommendedName>
    <alternativeName>
        <fullName evidence="1">tRNA hydroxylation protein O</fullName>
    </alternativeName>
</protein>